<dbReference type="EMBL" id="CP000468">
    <property type="protein sequence ID" value="ABI99872.1"/>
    <property type="molecule type" value="Genomic_DNA"/>
</dbReference>
<dbReference type="RefSeq" id="WP_000543535.1">
    <property type="nucleotide sequence ID" value="NZ_CADILS010000009.1"/>
</dbReference>
<dbReference type="SMR" id="A1A883"/>
<dbReference type="GeneID" id="93777047"/>
<dbReference type="KEGG" id="ecv:APECO1_1597"/>
<dbReference type="HOGENOM" id="CLU_108412_0_0_6"/>
<dbReference type="Proteomes" id="UP000008216">
    <property type="component" value="Chromosome"/>
</dbReference>
<dbReference type="GO" id="GO:0005524">
    <property type="term" value="F:ATP binding"/>
    <property type="evidence" value="ECO:0007669"/>
    <property type="project" value="UniProtKB-KW"/>
</dbReference>
<dbReference type="GO" id="GO:0003677">
    <property type="term" value="F:DNA binding"/>
    <property type="evidence" value="ECO:0007669"/>
    <property type="project" value="UniProtKB-KW"/>
</dbReference>
<dbReference type="GO" id="GO:0008270">
    <property type="term" value="F:zinc ion binding"/>
    <property type="evidence" value="ECO:0007669"/>
    <property type="project" value="UniProtKB-UniRule"/>
</dbReference>
<dbReference type="GO" id="GO:0045892">
    <property type="term" value="P:negative regulation of DNA-templated transcription"/>
    <property type="evidence" value="ECO:0007669"/>
    <property type="project" value="UniProtKB-UniRule"/>
</dbReference>
<dbReference type="HAMAP" id="MF_00440">
    <property type="entry name" value="NrdR"/>
    <property type="match status" value="1"/>
</dbReference>
<dbReference type="InterPro" id="IPR005144">
    <property type="entry name" value="ATP-cone_dom"/>
</dbReference>
<dbReference type="InterPro" id="IPR055173">
    <property type="entry name" value="NrdR-like_N"/>
</dbReference>
<dbReference type="InterPro" id="IPR003796">
    <property type="entry name" value="RNR_NrdR-like"/>
</dbReference>
<dbReference type="NCBIfam" id="TIGR00244">
    <property type="entry name" value="transcriptional regulator NrdR"/>
    <property type="match status" value="1"/>
</dbReference>
<dbReference type="PANTHER" id="PTHR30455">
    <property type="entry name" value="TRANSCRIPTIONAL REPRESSOR NRDR"/>
    <property type="match status" value="1"/>
</dbReference>
<dbReference type="PANTHER" id="PTHR30455:SF2">
    <property type="entry name" value="TRANSCRIPTIONAL REPRESSOR NRDR"/>
    <property type="match status" value="1"/>
</dbReference>
<dbReference type="Pfam" id="PF03477">
    <property type="entry name" value="ATP-cone"/>
    <property type="match status" value="1"/>
</dbReference>
<dbReference type="Pfam" id="PF22811">
    <property type="entry name" value="Zn_ribbon_NrdR"/>
    <property type="match status" value="1"/>
</dbReference>
<dbReference type="PROSITE" id="PS51161">
    <property type="entry name" value="ATP_CONE"/>
    <property type="match status" value="1"/>
</dbReference>
<gene>
    <name evidence="1" type="primary">nrdR</name>
    <name type="ordered locus">Ecok1_03790</name>
    <name type="ORF">APECO1_1597</name>
</gene>
<sequence length="149" mass="17229">MHCPFCFAVDTKVIDSRLVGEGSSVRRRRQCLVCNERFTTFEVAELVMPRVVKSNDVREPFNEEKLRSGMLRALEKRPVSSDDVEMAINHIKSQLRATGEREVPSKMIGNLVMEQLKKLDKVAYIRFASVYRSFEDIKEFGEEIARLED</sequence>
<protein>
    <recommendedName>
        <fullName evidence="1">Transcriptional repressor NrdR</fullName>
    </recommendedName>
</protein>
<reference key="1">
    <citation type="journal article" date="2007" name="J. Bacteriol.">
        <title>The genome sequence of avian pathogenic Escherichia coli strain O1:K1:H7 shares strong similarities with human extraintestinal pathogenic E. coli genomes.</title>
        <authorList>
            <person name="Johnson T.J."/>
            <person name="Kariyawasam S."/>
            <person name="Wannemuehler Y."/>
            <person name="Mangiamele P."/>
            <person name="Johnson S.J."/>
            <person name="Doetkott C."/>
            <person name="Skyberg J.A."/>
            <person name="Lynne A.M."/>
            <person name="Johnson J.R."/>
            <person name="Nolan L.K."/>
        </authorList>
    </citation>
    <scope>NUCLEOTIDE SEQUENCE [LARGE SCALE GENOMIC DNA]</scope>
</reference>
<keyword id="KW-0067">ATP-binding</keyword>
<keyword id="KW-0238">DNA-binding</keyword>
<keyword id="KW-0479">Metal-binding</keyword>
<keyword id="KW-0547">Nucleotide-binding</keyword>
<keyword id="KW-1185">Reference proteome</keyword>
<keyword id="KW-0678">Repressor</keyword>
<keyword id="KW-0804">Transcription</keyword>
<keyword id="KW-0805">Transcription regulation</keyword>
<keyword id="KW-0862">Zinc</keyword>
<keyword id="KW-0863">Zinc-finger</keyword>
<evidence type="ECO:0000255" key="1">
    <source>
        <dbReference type="HAMAP-Rule" id="MF_00440"/>
    </source>
</evidence>
<feature type="chain" id="PRO_1000080747" description="Transcriptional repressor NrdR">
    <location>
        <begin position="1"/>
        <end position="149"/>
    </location>
</feature>
<feature type="domain" description="ATP-cone" evidence="1">
    <location>
        <begin position="49"/>
        <end position="139"/>
    </location>
</feature>
<feature type="zinc finger region" evidence="1">
    <location>
        <begin position="3"/>
        <end position="34"/>
    </location>
</feature>
<accession>A1A883</accession>
<comment type="function">
    <text evidence="1">Negatively regulates transcription of bacterial ribonucleotide reductase nrd genes and operons by binding to NrdR-boxes.</text>
</comment>
<comment type="cofactor">
    <cofactor evidence="1">
        <name>Zn(2+)</name>
        <dbReference type="ChEBI" id="CHEBI:29105"/>
    </cofactor>
    <text evidence="1">Binds 1 zinc ion.</text>
</comment>
<comment type="similarity">
    <text evidence="1">Belongs to the NrdR family.</text>
</comment>
<organism>
    <name type="scientific">Escherichia coli O1:K1 / APEC</name>
    <dbReference type="NCBI Taxonomy" id="405955"/>
    <lineage>
        <taxon>Bacteria</taxon>
        <taxon>Pseudomonadati</taxon>
        <taxon>Pseudomonadota</taxon>
        <taxon>Gammaproteobacteria</taxon>
        <taxon>Enterobacterales</taxon>
        <taxon>Enterobacteriaceae</taxon>
        <taxon>Escherichia</taxon>
    </lineage>
</organism>
<proteinExistence type="inferred from homology"/>
<name>NRDR_ECOK1</name>